<protein>
    <recommendedName>
        <fullName>Putative S-adenosyl-L-methionine-dependent methyltransferase MAB_4587c</fullName>
        <ecNumber>2.1.1.-</ecNumber>
    </recommendedName>
</protein>
<accession>B1ML11</accession>
<organism>
    <name type="scientific">Mycobacteroides abscessus (strain ATCC 19977 / DSM 44196 / CCUG 20993 / CIP 104536 / JCM 13569 / NCTC 13031 / TMC 1543 / L948)</name>
    <name type="common">Mycobacterium abscessus</name>
    <dbReference type="NCBI Taxonomy" id="561007"/>
    <lineage>
        <taxon>Bacteria</taxon>
        <taxon>Bacillati</taxon>
        <taxon>Actinomycetota</taxon>
        <taxon>Actinomycetes</taxon>
        <taxon>Mycobacteriales</taxon>
        <taxon>Mycobacteriaceae</taxon>
        <taxon>Mycobacteroides</taxon>
        <taxon>Mycobacteroides abscessus</taxon>
    </lineage>
</organism>
<proteinExistence type="inferred from homology"/>
<evidence type="ECO:0000250" key="1"/>
<evidence type="ECO:0000305" key="2"/>
<gene>
    <name type="ordered locus">MAB_4587c</name>
</gene>
<sequence length="310" mass="33830">MARTEGDTWDIVTSVGATALVVSAMRAIEARKPEPLARDDYAQHFVAATKAEAPLFSELLEDPEAAQAPDIQLFSSYLGARTKYFDEFFLTAGNAGVRQAVILAAGLDVRGYRLPWAAGTTVYELDLPKVLEFKKQVLDEHNARATATVLDLHVDLRDDWPTVLKAAGFDPAQPTAWLAEGLLPFLPGAAQDLLFERIADLSAPGSRVAVEDFGAPGNQADRMSNAMQNEEGALQRIFKSIVEEDAPPSSLWFGDEREDPARWLTGHGWTVEATTAGELLKRYNRVPLAGEHELTDAMGQSRYFTAVLGA</sequence>
<comment type="function">
    <text evidence="1">Exhibits S-adenosyl-L-methionine-dependent methyltransferase activity.</text>
</comment>
<comment type="similarity">
    <text evidence="2">Belongs to the UPF0677 family.</text>
</comment>
<dbReference type="EC" id="2.1.1.-"/>
<dbReference type="EMBL" id="CU458896">
    <property type="protein sequence ID" value="CAM64656.1"/>
    <property type="molecule type" value="Genomic_DNA"/>
</dbReference>
<dbReference type="RefSeq" id="WP_005089590.1">
    <property type="nucleotide sequence ID" value="NZ_MLCG01000001.1"/>
</dbReference>
<dbReference type="SMR" id="B1ML11"/>
<dbReference type="GeneID" id="93381531"/>
<dbReference type="KEGG" id="mab:MAB_4587c"/>
<dbReference type="Proteomes" id="UP000007137">
    <property type="component" value="Chromosome"/>
</dbReference>
<dbReference type="GO" id="GO:0008168">
    <property type="term" value="F:methyltransferase activity"/>
    <property type="evidence" value="ECO:0007669"/>
    <property type="project" value="UniProtKB-KW"/>
</dbReference>
<dbReference type="GO" id="GO:0032259">
    <property type="term" value="P:methylation"/>
    <property type="evidence" value="ECO:0007669"/>
    <property type="project" value="UniProtKB-KW"/>
</dbReference>
<dbReference type="Gene3D" id="3.40.50.150">
    <property type="entry name" value="Vaccinia Virus protein VP39"/>
    <property type="match status" value="1"/>
</dbReference>
<dbReference type="InterPro" id="IPR007213">
    <property type="entry name" value="Ppm1/Ppm2/Tcmp"/>
</dbReference>
<dbReference type="InterPro" id="IPR029063">
    <property type="entry name" value="SAM-dependent_MTases_sf"/>
</dbReference>
<dbReference type="InterPro" id="IPR011610">
    <property type="entry name" value="SAM_mthyl_Trfase_ML2640-like"/>
</dbReference>
<dbReference type="NCBIfam" id="TIGR00027">
    <property type="entry name" value="mthyl_TIGR00027"/>
    <property type="match status" value="1"/>
</dbReference>
<dbReference type="PANTHER" id="PTHR43619">
    <property type="entry name" value="S-ADENOSYL-L-METHIONINE-DEPENDENT METHYLTRANSFERASE YKTD-RELATED"/>
    <property type="match status" value="1"/>
</dbReference>
<dbReference type="PANTHER" id="PTHR43619:SF2">
    <property type="entry name" value="S-ADENOSYL-L-METHIONINE-DEPENDENT METHYLTRANSFERASES SUPERFAMILY PROTEIN"/>
    <property type="match status" value="1"/>
</dbReference>
<dbReference type="Pfam" id="PF04072">
    <property type="entry name" value="LCM"/>
    <property type="match status" value="1"/>
</dbReference>
<dbReference type="SUPFAM" id="SSF53335">
    <property type="entry name" value="S-adenosyl-L-methionine-dependent methyltransferases"/>
    <property type="match status" value="1"/>
</dbReference>
<reference key="1">
    <citation type="journal article" date="2009" name="PLoS ONE">
        <title>Non mycobacterial virulence genes in the genome of the emerging pathogen Mycobacterium abscessus.</title>
        <authorList>
            <person name="Ripoll F."/>
            <person name="Pasek S."/>
            <person name="Schenowitz C."/>
            <person name="Dossat C."/>
            <person name="Barbe V."/>
            <person name="Rottman M."/>
            <person name="Macheras E."/>
            <person name="Heym B."/>
            <person name="Herrmann J.L."/>
            <person name="Daffe M."/>
            <person name="Brosch R."/>
            <person name="Risler J.L."/>
            <person name="Gaillard J.L."/>
        </authorList>
    </citation>
    <scope>NUCLEOTIDE SEQUENCE [LARGE SCALE GENOMIC DNA]</scope>
    <source>
        <strain>ATCC 19977 / DSM 44196 / CCUG 20993 / CIP 104536 / JCM 13569 / NCTC 13031 / TMC 1543 / L948</strain>
    </source>
</reference>
<keyword id="KW-0489">Methyltransferase</keyword>
<keyword id="KW-1185">Reference proteome</keyword>
<keyword id="KW-0949">S-adenosyl-L-methionine</keyword>
<keyword id="KW-0808">Transferase</keyword>
<feature type="chain" id="PRO_0000361127" description="Putative S-adenosyl-L-methionine-dependent methyltransferase MAB_4587c">
    <location>
        <begin position="1"/>
        <end position="310"/>
    </location>
</feature>
<feature type="binding site" evidence="1">
    <location>
        <position position="126"/>
    </location>
    <ligand>
        <name>S-adenosyl-L-methionine</name>
        <dbReference type="ChEBI" id="CHEBI:59789"/>
    </ligand>
</feature>
<feature type="binding site" evidence="1">
    <location>
        <begin position="155"/>
        <end position="156"/>
    </location>
    <ligand>
        <name>S-adenosyl-L-methionine</name>
        <dbReference type="ChEBI" id="CHEBI:59789"/>
    </ligand>
</feature>
<name>Y4587_MYCA9</name>